<dbReference type="EMBL" id="BC046874">
    <property type="protein sequence ID" value="AAH46874.1"/>
    <property type="molecule type" value="mRNA"/>
</dbReference>
<dbReference type="EMBL" id="BN000276">
    <property type="protein sequence ID" value="CAE30491.1"/>
    <property type="molecule type" value="mRNA"/>
</dbReference>
<dbReference type="RefSeq" id="NP_956099.1">
    <property type="nucleotide sequence ID" value="NM_199805.1"/>
</dbReference>
<dbReference type="SMR" id="Q803A0"/>
<dbReference type="BioGRID" id="84576">
    <property type="interactions" value="1"/>
</dbReference>
<dbReference type="FunCoup" id="Q803A0">
    <property type="interactions" value="489"/>
</dbReference>
<dbReference type="STRING" id="7955.ENSDARP00000042059"/>
<dbReference type="PaxDb" id="7955-ENSDARP00000042059"/>
<dbReference type="GeneID" id="327437"/>
<dbReference type="KEGG" id="dre:327437"/>
<dbReference type="AGR" id="ZFIN:ZDB-GENE-030131-5648"/>
<dbReference type="CTD" id="79960"/>
<dbReference type="ZFIN" id="ZDB-GENE-030131-5648">
    <property type="gene designation" value="jade1"/>
</dbReference>
<dbReference type="eggNOG" id="KOG0954">
    <property type="taxonomic scope" value="Eukaryota"/>
</dbReference>
<dbReference type="InParanoid" id="Q803A0"/>
<dbReference type="OrthoDB" id="20839at2759"/>
<dbReference type="PhylomeDB" id="Q803A0"/>
<dbReference type="PRO" id="PR:Q803A0"/>
<dbReference type="Proteomes" id="UP000000437">
    <property type="component" value="Alternate scaffold 17"/>
</dbReference>
<dbReference type="Proteomes" id="UP000000437">
    <property type="component" value="Chromosome 17"/>
</dbReference>
<dbReference type="GO" id="GO:0042995">
    <property type="term" value="C:cell projection"/>
    <property type="evidence" value="ECO:0007669"/>
    <property type="project" value="UniProtKB-KW"/>
</dbReference>
<dbReference type="GO" id="GO:0005737">
    <property type="term" value="C:cytoplasm"/>
    <property type="evidence" value="ECO:0007669"/>
    <property type="project" value="UniProtKB-SubCell"/>
</dbReference>
<dbReference type="GO" id="GO:0005856">
    <property type="term" value="C:cytoskeleton"/>
    <property type="evidence" value="ECO:0007669"/>
    <property type="project" value="UniProtKB-KW"/>
</dbReference>
<dbReference type="GO" id="GO:0000123">
    <property type="term" value="C:histone acetyltransferase complex"/>
    <property type="evidence" value="ECO:0000318"/>
    <property type="project" value="GO_Central"/>
</dbReference>
<dbReference type="GO" id="GO:0005634">
    <property type="term" value="C:nucleus"/>
    <property type="evidence" value="ECO:0007669"/>
    <property type="project" value="UniProtKB-SubCell"/>
</dbReference>
<dbReference type="GO" id="GO:0008270">
    <property type="term" value="F:zinc ion binding"/>
    <property type="evidence" value="ECO:0007669"/>
    <property type="project" value="UniProtKB-KW"/>
</dbReference>
<dbReference type="GO" id="GO:0006915">
    <property type="term" value="P:apoptotic process"/>
    <property type="evidence" value="ECO:0007669"/>
    <property type="project" value="UniProtKB-KW"/>
</dbReference>
<dbReference type="GO" id="GO:0060828">
    <property type="term" value="P:regulation of canonical Wnt signaling pathway"/>
    <property type="evidence" value="ECO:0000316"/>
    <property type="project" value="ZFIN"/>
</dbReference>
<dbReference type="GO" id="GO:0006357">
    <property type="term" value="P:regulation of transcription by RNA polymerase II"/>
    <property type="evidence" value="ECO:0000318"/>
    <property type="project" value="GO_Central"/>
</dbReference>
<dbReference type="CDD" id="cd15671">
    <property type="entry name" value="ePHD_JADE"/>
    <property type="match status" value="1"/>
</dbReference>
<dbReference type="CDD" id="cd15679">
    <property type="entry name" value="PHD_JADE1"/>
    <property type="match status" value="1"/>
</dbReference>
<dbReference type="FunFam" id="3.30.40.10:FF:000004">
    <property type="entry name" value="Jade family PHD finger 2"/>
    <property type="match status" value="1"/>
</dbReference>
<dbReference type="FunFam" id="3.30.40.10:FF:000030">
    <property type="entry name" value="Protein Jade-1 isoform 1"/>
    <property type="match status" value="1"/>
</dbReference>
<dbReference type="Gene3D" id="3.30.40.10">
    <property type="entry name" value="Zinc/RING finger domain, C3HC4 (zinc finger)"/>
    <property type="match status" value="2"/>
</dbReference>
<dbReference type="InterPro" id="IPR019542">
    <property type="entry name" value="Enhancer_polycomb-like_N"/>
</dbReference>
<dbReference type="InterPro" id="IPR034732">
    <property type="entry name" value="EPHD"/>
</dbReference>
<dbReference type="InterPro" id="IPR050701">
    <property type="entry name" value="Histone_Mod_Regulator"/>
</dbReference>
<dbReference type="InterPro" id="IPR039546">
    <property type="entry name" value="Jade-1_PHD"/>
</dbReference>
<dbReference type="InterPro" id="IPR019786">
    <property type="entry name" value="Zinc_finger_PHD-type_CS"/>
</dbReference>
<dbReference type="InterPro" id="IPR011011">
    <property type="entry name" value="Znf_FYVE_PHD"/>
</dbReference>
<dbReference type="InterPro" id="IPR001965">
    <property type="entry name" value="Znf_PHD"/>
</dbReference>
<dbReference type="InterPro" id="IPR019787">
    <property type="entry name" value="Znf_PHD-finger"/>
</dbReference>
<dbReference type="InterPro" id="IPR013083">
    <property type="entry name" value="Znf_RING/FYVE/PHD"/>
</dbReference>
<dbReference type="PANTHER" id="PTHR13793">
    <property type="entry name" value="PHD FINGER PROTEINS"/>
    <property type="match status" value="1"/>
</dbReference>
<dbReference type="PANTHER" id="PTHR13793:SF79">
    <property type="entry name" value="PROTEIN JADE-1"/>
    <property type="match status" value="1"/>
</dbReference>
<dbReference type="Pfam" id="PF10513">
    <property type="entry name" value="EPL1"/>
    <property type="match status" value="1"/>
</dbReference>
<dbReference type="Pfam" id="PF13831">
    <property type="entry name" value="PHD_2"/>
    <property type="match status" value="1"/>
</dbReference>
<dbReference type="Pfam" id="PF13832">
    <property type="entry name" value="zf-HC5HC2H_2"/>
    <property type="match status" value="1"/>
</dbReference>
<dbReference type="SMART" id="SM00249">
    <property type="entry name" value="PHD"/>
    <property type="match status" value="2"/>
</dbReference>
<dbReference type="SUPFAM" id="SSF57903">
    <property type="entry name" value="FYVE/PHD zinc finger"/>
    <property type="match status" value="1"/>
</dbReference>
<dbReference type="PROSITE" id="PS51805">
    <property type="entry name" value="EPHD"/>
    <property type="match status" value="1"/>
</dbReference>
<dbReference type="PROSITE" id="PS01359">
    <property type="entry name" value="ZF_PHD_1"/>
    <property type="match status" value="1"/>
</dbReference>
<dbReference type="PROSITE" id="PS50016">
    <property type="entry name" value="ZF_PHD_2"/>
    <property type="match status" value="1"/>
</dbReference>
<gene>
    <name type="primary">jade1</name>
    <name type="synonym">phf17</name>
    <name type="ORF">zgc:55323</name>
</gene>
<name>JADE1_DANRE</name>
<comment type="function">
    <text evidence="2">Scaffold subunit of some HBO1 complexes, which have a histone H4 acetyltransferase activity. Plays a key role in HBO1 complex by directing KAT7/HBO1 specificity towards histone H4 acetylation (H4K5ac, H4K8ac and H4K12ac), regulating DNA replication initiation, regulating DNA replication initiation.</text>
</comment>
<comment type="subunit">
    <text evidence="2">Component of the HBO1 complex composed.</text>
</comment>
<comment type="subcellular location">
    <subcellularLocation>
        <location evidence="2">Nucleus</location>
    </subcellularLocation>
    <subcellularLocation>
        <location evidence="2">Chromosome</location>
    </subcellularLocation>
    <subcellularLocation>
        <location evidence="2">Cytoplasm</location>
    </subcellularLocation>
    <subcellularLocation>
        <location evidence="2">Cytoplasm</location>
        <location evidence="2">Cytoskeleton</location>
        <location evidence="2">Cilium basal body</location>
    </subcellularLocation>
    <text evidence="2">Localizes to the ciliary transition zone.</text>
</comment>
<comment type="domain">
    <text evidence="1">The 2 PHD-type zinc fingers are required for transcriptional activity.</text>
</comment>
<comment type="similarity">
    <text evidence="6">Belongs to the JADE family.</text>
</comment>
<proteinExistence type="evidence at transcript level"/>
<protein>
    <recommendedName>
        <fullName>Protein Jade-1</fullName>
    </recommendedName>
    <alternativeName>
        <fullName>Jade family PHD finger protein 1</fullName>
    </alternativeName>
    <alternativeName>
        <fullName>PHD finger protein 17</fullName>
    </alternativeName>
</protein>
<keyword id="KW-0010">Activator</keyword>
<keyword id="KW-0053">Apoptosis</keyword>
<keyword id="KW-0966">Cell projection</keyword>
<keyword id="KW-0158">Chromosome</keyword>
<keyword id="KW-0963">Cytoplasm</keyword>
<keyword id="KW-0206">Cytoskeleton</keyword>
<keyword id="KW-0479">Metal-binding</keyword>
<keyword id="KW-0539">Nucleus</keyword>
<keyword id="KW-1185">Reference proteome</keyword>
<keyword id="KW-0677">Repeat</keyword>
<keyword id="KW-0804">Transcription</keyword>
<keyword id="KW-0805">Transcription regulation</keyword>
<keyword id="KW-0862">Zinc</keyword>
<keyword id="KW-0863">Zinc-finger</keyword>
<sequence length="829" mass="94548">MKRSRVPSTSEDSDNGSNSTSWSQHSNSKHRKQSGKRPSEVFRTDLITAMKLHDSHQLNPEDYYELADPWRQEWEKGVQVPVSPESIPQCAVRTVAEKSTAPLFIKPKKLIRSSESSMLGYVGIQTLADGMCRYDLNEEDVAWLQITNEEFSKMGMQPLDELTMERVMEEFERRCYDNMSHAMETEEGLGIEYDEDVVCDVCQSPDGEDGNEMVFCDKCNICVHQACYGILKVPEGSWLCRTCALGIFPKCHLCPKKGGAMKPTRSGTKWVHVSCALWIPEVSIGNPEKMEPITNVSHIPSNRWALICCLCKEKTGACIQCSAKSCRVAFHVTCGLHCGLKMNTILTEADEVKFKSFCPKHSGLDWNEEEGDDDRPVKVPTREDRSRNRGIDFSASSQTRLSQNPEETRLSERKLRVQQLEDEFYRFVAADEVAEHLQLPLEMVDILFQYWKLKRKVNFNQPLIMPKKEEEDSLARREQEVLLRRLRLFTHLRQDLERVRNLTYMVSRRERIKRTLCRVQEQIFHHHVRLLEQGRVTGVSSTRRLEEAMFYFRTTPPVPASPQPLKGHCGQNSTLSSSEKGSNSYRSSKHIEADKPAKMLMDGVPSSGDSVRSETVMSASSRRSEGRTRSGESHRKEEESERPLEDRRRKSKLWDQVSIKDKLRHAKSMEDTLSSETELDTMDDRLLLSHTNANSVATAPNMYSGSPRKTNASHQGKLVPNGTSGRHLKNWGSFRIPKRSERTSAGRQTERQEADNTADQNSSLKTFSTSPSSPQIRTRLRTGSENRRHLEESDLGQSEQGKRCHTQRLPSPMTRRYGSDVIQRGVLAS</sequence>
<accession>Q803A0</accession>
<feature type="chain" id="PRO_0000253531" description="Protein Jade-1">
    <location>
        <begin position="1"/>
        <end position="829"/>
    </location>
</feature>
<feature type="zinc finger region" description="PHD-type 1" evidence="3">
    <location>
        <begin position="196"/>
        <end position="246"/>
    </location>
</feature>
<feature type="zinc finger region" description="C2HC pre-PHD-type" evidence="4">
    <location>
        <begin position="248"/>
        <end position="282"/>
    </location>
</feature>
<feature type="zinc finger region" description="PHD-type 2" evidence="4">
    <location>
        <begin position="306"/>
        <end position="362"/>
    </location>
</feature>
<feature type="region of interest" description="Disordered" evidence="5">
    <location>
        <begin position="1"/>
        <end position="40"/>
    </location>
</feature>
<feature type="region of interest" description="Disordered" evidence="5">
    <location>
        <begin position="368"/>
        <end position="408"/>
    </location>
</feature>
<feature type="region of interest" description="Disordered" evidence="5">
    <location>
        <begin position="556"/>
        <end position="651"/>
    </location>
</feature>
<feature type="region of interest" description="Disordered" evidence="5">
    <location>
        <begin position="697"/>
        <end position="829"/>
    </location>
</feature>
<feature type="compositionally biased region" description="Polar residues" evidence="5">
    <location>
        <begin position="1"/>
        <end position="10"/>
    </location>
</feature>
<feature type="compositionally biased region" description="Low complexity" evidence="5">
    <location>
        <begin position="15"/>
        <end position="26"/>
    </location>
</feature>
<feature type="compositionally biased region" description="Basic and acidic residues" evidence="5">
    <location>
        <begin position="374"/>
        <end position="390"/>
    </location>
</feature>
<feature type="compositionally biased region" description="Polar residues" evidence="5">
    <location>
        <begin position="394"/>
        <end position="405"/>
    </location>
</feature>
<feature type="compositionally biased region" description="Polar residues" evidence="5">
    <location>
        <begin position="570"/>
        <end position="586"/>
    </location>
</feature>
<feature type="compositionally biased region" description="Polar residues" evidence="5">
    <location>
        <begin position="607"/>
        <end position="619"/>
    </location>
</feature>
<feature type="compositionally biased region" description="Basic and acidic residues" evidence="5">
    <location>
        <begin position="622"/>
        <end position="648"/>
    </location>
</feature>
<feature type="compositionally biased region" description="Polar residues" evidence="5">
    <location>
        <begin position="697"/>
        <end position="714"/>
    </location>
</feature>
<feature type="compositionally biased region" description="Basic and acidic residues" evidence="5">
    <location>
        <begin position="738"/>
        <end position="754"/>
    </location>
</feature>
<feature type="compositionally biased region" description="Low complexity" evidence="5">
    <location>
        <begin position="762"/>
        <end position="774"/>
    </location>
</feature>
<feature type="compositionally biased region" description="Basic and acidic residues" evidence="5">
    <location>
        <begin position="782"/>
        <end position="792"/>
    </location>
</feature>
<organism>
    <name type="scientific">Danio rerio</name>
    <name type="common">Zebrafish</name>
    <name type="synonym">Brachydanio rerio</name>
    <dbReference type="NCBI Taxonomy" id="7955"/>
    <lineage>
        <taxon>Eukaryota</taxon>
        <taxon>Metazoa</taxon>
        <taxon>Chordata</taxon>
        <taxon>Craniata</taxon>
        <taxon>Vertebrata</taxon>
        <taxon>Euteleostomi</taxon>
        <taxon>Actinopterygii</taxon>
        <taxon>Neopterygii</taxon>
        <taxon>Teleostei</taxon>
        <taxon>Ostariophysi</taxon>
        <taxon>Cypriniformes</taxon>
        <taxon>Danionidae</taxon>
        <taxon>Danioninae</taxon>
        <taxon>Danio</taxon>
    </lineage>
</organism>
<evidence type="ECO:0000250" key="1"/>
<evidence type="ECO:0000250" key="2">
    <source>
        <dbReference type="UniProtKB" id="Q6IE81"/>
    </source>
</evidence>
<evidence type="ECO:0000255" key="3">
    <source>
        <dbReference type="PROSITE-ProRule" id="PRU00146"/>
    </source>
</evidence>
<evidence type="ECO:0000255" key="4">
    <source>
        <dbReference type="PROSITE-ProRule" id="PRU01146"/>
    </source>
</evidence>
<evidence type="ECO:0000256" key="5">
    <source>
        <dbReference type="SAM" id="MobiDB-lite"/>
    </source>
</evidence>
<evidence type="ECO:0000305" key="6"/>
<reference key="1">
    <citation type="submission" date="2003-02" db="EMBL/GenBank/DDBJ databases">
        <authorList>
            <consortium name="NIH - Zebrafish Gene Collection (ZGC) project"/>
        </authorList>
    </citation>
    <scope>NUCLEOTIDE SEQUENCE [LARGE SCALE MRNA]</scope>
    <source>
        <strain>AB</strain>
    </source>
</reference>
<reference key="2">
    <citation type="journal article" date="2003" name="Mol. Cell. Biol.">
        <title>Identification of Jade1, a gene encoding a PHD zinc finger protein, in a gene trap mutagenesis screen for genes involved in anteroposterior axis development.</title>
        <authorList>
            <person name="Tzouanacou E."/>
            <person name="Tweedie S."/>
            <person name="Wilson V."/>
        </authorList>
    </citation>
    <scope>IDENTIFICATION</scope>
</reference>